<proteinExistence type="inferred from homology"/>
<dbReference type="EC" id="1.4.3.5" evidence="1"/>
<dbReference type="EMBL" id="AM902716">
    <property type="protein sequence ID" value="CAP41192.1"/>
    <property type="molecule type" value="Genomic_DNA"/>
</dbReference>
<dbReference type="SMR" id="A9I847"/>
<dbReference type="STRING" id="94624.Bpet0860"/>
<dbReference type="KEGG" id="bpt:Bpet0860"/>
<dbReference type="eggNOG" id="COG0259">
    <property type="taxonomic scope" value="Bacteria"/>
</dbReference>
<dbReference type="UniPathway" id="UPA01068">
    <property type="reaction ID" value="UER00304"/>
</dbReference>
<dbReference type="UniPathway" id="UPA01068">
    <property type="reaction ID" value="UER00305"/>
</dbReference>
<dbReference type="Proteomes" id="UP000001225">
    <property type="component" value="Chromosome"/>
</dbReference>
<dbReference type="GO" id="GO:0010181">
    <property type="term" value="F:FMN binding"/>
    <property type="evidence" value="ECO:0007669"/>
    <property type="project" value="UniProtKB-UniRule"/>
</dbReference>
<dbReference type="GO" id="GO:0004733">
    <property type="term" value="F:pyridoxamine phosphate oxidase activity"/>
    <property type="evidence" value="ECO:0007669"/>
    <property type="project" value="UniProtKB-UniRule"/>
</dbReference>
<dbReference type="GO" id="GO:0008615">
    <property type="term" value="P:pyridoxine biosynthetic process"/>
    <property type="evidence" value="ECO:0007669"/>
    <property type="project" value="UniProtKB-KW"/>
</dbReference>
<dbReference type="FunFam" id="2.30.110.10:FF:000005">
    <property type="entry name" value="NAD(P)H-hydrate epimerase"/>
    <property type="match status" value="1"/>
</dbReference>
<dbReference type="Gene3D" id="2.30.110.10">
    <property type="entry name" value="Electron Transport, Fmn-binding Protein, Chain A"/>
    <property type="match status" value="1"/>
</dbReference>
<dbReference type="HAMAP" id="MF_01629">
    <property type="entry name" value="PdxH"/>
    <property type="match status" value="1"/>
</dbReference>
<dbReference type="InterPro" id="IPR000659">
    <property type="entry name" value="Pyridox_Oxase"/>
</dbReference>
<dbReference type="InterPro" id="IPR019740">
    <property type="entry name" value="Pyridox_Oxase_CS"/>
</dbReference>
<dbReference type="InterPro" id="IPR011576">
    <property type="entry name" value="Pyridox_Oxase_N"/>
</dbReference>
<dbReference type="InterPro" id="IPR019576">
    <property type="entry name" value="Pyridoxamine_oxidase_dimer_C"/>
</dbReference>
<dbReference type="InterPro" id="IPR012349">
    <property type="entry name" value="Split_barrel_FMN-bd"/>
</dbReference>
<dbReference type="NCBIfam" id="TIGR00558">
    <property type="entry name" value="pdxH"/>
    <property type="match status" value="1"/>
</dbReference>
<dbReference type="NCBIfam" id="NF004231">
    <property type="entry name" value="PRK05679.1"/>
    <property type="match status" value="1"/>
</dbReference>
<dbReference type="PANTHER" id="PTHR10851:SF0">
    <property type="entry name" value="PYRIDOXINE-5'-PHOSPHATE OXIDASE"/>
    <property type="match status" value="1"/>
</dbReference>
<dbReference type="PANTHER" id="PTHR10851">
    <property type="entry name" value="PYRIDOXINE-5-PHOSPHATE OXIDASE"/>
    <property type="match status" value="1"/>
</dbReference>
<dbReference type="Pfam" id="PF10590">
    <property type="entry name" value="PNP_phzG_C"/>
    <property type="match status" value="1"/>
</dbReference>
<dbReference type="Pfam" id="PF01243">
    <property type="entry name" value="PNPOx_N"/>
    <property type="match status" value="1"/>
</dbReference>
<dbReference type="PIRSF" id="PIRSF000190">
    <property type="entry name" value="Pyd_amn-ph_oxd"/>
    <property type="match status" value="1"/>
</dbReference>
<dbReference type="SUPFAM" id="SSF50475">
    <property type="entry name" value="FMN-binding split barrel"/>
    <property type="match status" value="1"/>
</dbReference>
<dbReference type="PROSITE" id="PS01064">
    <property type="entry name" value="PYRIDOX_OXIDASE"/>
    <property type="match status" value="1"/>
</dbReference>
<protein>
    <recommendedName>
        <fullName evidence="1">Pyridoxine/pyridoxamine 5'-phosphate oxidase</fullName>
        <ecNumber evidence="1">1.4.3.5</ecNumber>
    </recommendedName>
    <alternativeName>
        <fullName evidence="1">PNP/PMP oxidase</fullName>
        <shortName evidence="1">PNPOx</shortName>
    </alternativeName>
    <alternativeName>
        <fullName evidence="1">Pyridoxal 5'-phosphate synthase</fullName>
    </alternativeName>
</protein>
<keyword id="KW-0285">Flavoprotein</keyword>
<keyword id="KW-0288">FMN</keyword>
<keyword id="KW-0560">Oxidoreductase</keyword>
<keyword id="KW-0664">Pyridoxine biosynthesis</keyword>
<accession>A9I847</accession>
<feature type="chain" id="PRO_1000186289" description="Pyridoxine/pyridoxamine 5'-phosphate oxidase">
    <location>
        <begin position="1"/>
        <end position="210"/>
    </location>
</feature>
<feature type="binding site" evidence="1">
    <location>
        <begin position="7"/>
        <end position="10"/>
    </location>
    <ligand>
        <name>substrate</name>
    </ligand>
</feature>
<feature type="binding site" evidence="1">
    <location>
        <begin position="60"/>
        <end position="65"/>
    </location>
    <ligand>
        <name>FMN</name>
        <dbReference type="ChEBI" id="CHEBI:58210"/>
    </ligand>
</feature>
<feature type="binding site" evidence="1">
    <location>
        <position position="65"/>
    </location>
    <ligand>
        <name>substrate</name>
    </ligand>
</feature>
<feature type="binding site" evidence="1">
    <location>
        <begin position="75"/>
        <end position="76"/>
    </location>
    <ligand>
        <name>FMN</name>
        <dbReference type="ChEBI" id="CHEBI:58210"/>
    </ligand>
</feature>
<feature type="binding site" evidence="1">
    <location>
        <position position="81"/>
    </location>
    <ligand>
        <name>FMN</name>
        <dbReference type="ChEBI" id="CHEBI:58210"/>
    </ligand>
</feature>
<feature type="binding site" evidence="1">
    <location>
        <position position="82"/>
    </location>
    <ligand>
        <name>FMN</name>
        <dbReference type="ChEBI" id="CHEBI:58210"/>
    </ligand>
</feature>
<feature type="binding site" evidence="1">
    <location>
        <position position="104"/>
    </location>
    <ligand>
        <name>FMN</name>
        <dbReference type="ChEBI" id="CHEBI:58210"/>
    </ligand>
</feature>
<feature type="binding site" evidence="1">
    <location>
        <position position="122"/>
    </location>
    <ligand>
        <name>substrate</name>
    </ligand>
</feature>
<feature type="binding site" evidence="1">
    <location>
        <position position="126"/>
    </location>
    <ligand>
        <name>substrate</name>
    </ligand>
</feature>
<feature type="binding site" evidence="1">
    <location>
        <position position="130"/>
    </location>
    <ligand>
        <name>substrate</name>
    </ligand>
</feature>
<feature type="binding site" evidence="1">
    <location>
        <begin position="139"/>
        <end position="140"/>
    </location>
    <ligand>
        <name>FMN</name>
        <dbReference type="ChEBI" id="CHEBI:58210"/>
    </ligand>
</feature>
<feature type="binding site" evidence="1">
    <location>
        <position position="182"/>
    </location>
    <ligand>
        <name>FMN</name>
        <dbReference type="ChEBI" id="CHEBI:58210"/>
    </ligand>
</feature>
<feature type="binding site" evidence="1">
    <location>
        <begin position="188"/>
        <end position="190"/>
    </location>
    <ligand>
        <name>substrate</name>
    </ligand>
</feature>
<feature type="binding site" evidence="1">
    <location>
        <position position="192"/>
    </location>
    <ligand>
        <name>FMN</name>
        <dbReference type="ChEBI" id="CHEBI:58210"/>
    </ligand>
</feature>
<sequence length="210" mass="23952">MSVSDLRQSYEKSTLLEDSAAASPFDQFSQWFDQALAAQVPEPNAMTLATVDADGQPSARIVLIKGYDSRGFAFYTNYESRKGHDLLANPRAALLFFWQPLERQVRIEGRVEQVSAEESDAYFHSRPLGSRIGAWASRQSQPVTRAELEAREQEIRARYGEQPPRPPHWGGYRVVPTLFEFWQGRPSRLHDRLRYLPDGRGGWAIDRLSP</sequence>
<evidence type="ECO:0000255" key="1">
    <source>
        <dbReference type="HAMAP-Rule" id="MF_01629"/>
    </source>
</evidence>
<organism>
    <name type="scientific">Bordetella petrii (strain ATCC BAA-461 / DSM 12804 / CCUG 43448)</name>
    <dbReference type="NCBI Taxonomy" id="340100"/>
    <lineage>
        <taxon>Bacteria</taxon>
        <taxon>Pseudomonadati</taxon>
        <taxon>Pseudomonadota</taxon>
        <taxon>Betaproteobacteria</taxon>
        <taxon>Burkholderiales</taxon>
        <taxon>Alcaligenaceae</taxon>
        <taxon>Bordetella</taxon>
    </lineage>
</organism>
<gene>
    <name evidence="1" type="primary">pdxH</name>
    <name type="ordered locus">Bpet0860</name>
</gene>
<reference key="1">
    <citation type="journal article" date="2008" name="BMC Genomics">
        <title>The missing link: Bordetella petrii is endowed with both the metabolic versatility of environmental bacteria and virulence traits of pathogenic Bordetellae.</title>
        <authorList>
            <person name="Gross R."/>
            <person name="Guzman C.A."/>
            <person name="Sebaihia M."/>
            <person name="Martin dos Santos V.A.P."/>
            <person name="Pieper D.H."/>
            <person name="Koebnik R."/>
            <person name="Lechner M."/>
            <person name="Bartels D."/>
            <person name="Buhrmester J."/>
            <person name="Choudhuri J.V."/>
            <person name="Ebensen T."/>
            <person name="Gaigalat L."/>
            <person name="Herrmann S."/>
            <person name="Khachane A.N."/>
            <person name="Larisch C."/>
            <person name="Link S."/>
            <person name="Linke B."/>
            <person name="Meyer F."/>
            <person name="Mormann S."/>
            <person name="Nakunst D."/>
            <person name="Rueckert C."/>
            <person name="Schneiker-Bekel S."/>
            <person name="Schulze K."/>
            <person name="Voerholter F.-J."/>
            <person name="Yevsa T."/>
            <person name="Engle J.T."/>
            <person name="Goldman W.E."/>
            <person name="Puehler A."/>
            <person name="Goebel U.B."/>
            <person name="Goesmann A."/>
            <person name="Bloecker H."/>
            <person name="Kaiser O."/>
            <person name="Martinez-Arias R."/>
        </authorList>
    </citation>
    <scope>NUCLEOTIDE SEQUENCE [LARGE SCALE GENOMIC DNA]</scope>
    <source>
        <strain>ATCC BAA-461 / DSM 12804 / CCUG 43448</strain>
    </source>
</reference>
<name>PDXH_BORPD</name>
<comment type="function">
    <text evidence="1">Catalyzes the oxidation of either pyridoxine 5'-phosphate (PNP) or pyridoxamine 5'-phosphate (PMP) into pyridoxal 5'-phosphate (PLP).</text>
</comment>
<comment type="catalytic activity">
    <reaction evidence="1">
        <text>pyridoxamine 5'-phosphate + O2 + H2O = pyridoxal 5'-phosphate + H2O2 + NH4(+)</text>
        <dbReference type="Rhea" id="RHEA:15817"/>
        <dbReference type="ChEBI" id="CHEBI:15377"/>
        <dbReference type="ChEBI" id="CHEBI:15379"/>
        <dbReference type="ChEBI" id="CHEBI:16240"/>
        <dbReference type="ChEBI" id="CHEBI:28938"/>
        <dbReference type="ChEBI" id="CHEBI:58451"/>
        <dbReference type="ChEBI" id="CHEBI:597326"/>
        <dbReference type="EC" id="1.4.3.5"/>
    </reaction>
</comment>
<comment type="catalytic activity">
    <reaction evidence="1">
        <text>pyridoxine 5'-phosphate + O2 = pyridoxal 5'-phosphate + H2O2</text>
        <dbReference type="Rhea" id="RHEA:15149"/>
        <dbReference type="ChEBI" id="CHEBI:15379"/>
        <dbReference type="ChEBI" id="CHEBI:16240"/>
        <dbReference type="ChEBI" id="CHEBI:58589"/>
        <dbReference type="ChEBI" id="CHEBI:597326"/>
        <dbReference type="EC" id="1.4.3.5"/>
    </reaction>
</comment>
<comment type="cofactor">
    <cofactor evidence="1">
        <name>FMN</name>
        <dbReference type="ChEBI" id="CHEBI:58210"/>
    </cofactor>
    <text evidence="1">Binds 1 FMN per subunit.</text>
</comment>
<comment type="pathway">
    <text evidence="1">Cofactor metabolism; pyridoxal 5'-phosphate salvage; pyridoxal 5'-phosphate from pyridoxamine 5'-phosphate: step 1/1.</text>
</comment>
<comment type="pathway">
    <text evidence="1">Cofactor metabolism; pyridoxal 5'-phosphate salvage; pyridoxal 5'-phosphate from pyridoxine 5'-phosphate: step 1/1.</text>
</comment>
<comment type="subunit">
    <text evidence="1">Homodimer.</text>
</comment>
<comment type="similarity">
    <text evidence="1">Belongs to the pyridoxamine 5'-phosphate oxidase family.</text>
</comment>